<comment type="function">
    <text evidence="1">Catalyzes the condensation reaction of fatty acid synthesis by the addition to an acyl acceptor of two carbons from malonyl-ACP. Catalyzes the first condensation reaction which initiates fatty acid synthesis and may therefore play a role in governing the total rate of fatty acid production. Possesses both acetoacetyl-ACP synthase and acetyl transacylase activities. Its substrate specificity determines the biosynthesis of branched-chain and/or straight-chain of fatty acids.</text>
</comment>
<comment type="catalytic activity">
    <reaction evidence="1">
        <text>malonyl-[ACP] + acetyl-CoA + H(+) = 3-oxobutanoyl-[ACP] + CO2 + CoA</text>
        <dbReference type="Rhea" id="RHEA:12080"/>
        <dbReference type="Rhea" id="RHEA-COMP:9623"/>
        <dbReference type="Rhea" id="RHEA-COMP:9625"/>
        <dbReference type="ChEBI" id="CHEBI:15378"/>
        <dbReference type="ChEBI" id="CHEBI:16526"/>
        <dbReference type="ChEBI" id="CHEBI:57287"/>
        <dbReference type="ChEBI" id="CHEBI:57288"/>
        <dbReference type="ChEBI" id="CHEBI:78449"/>
        <dbReference type="ChEBI" id="CHEBI:78450"/>
        <dbReference type="EC" id="2.3.1.180"/>
    </reaction>
</comment>
<comment type="pathway">
    <text evidence="1">Lipid metabolism; fatty acid biosynthesis.</text>
</comment>
<comment type="subunit">
    <text evidence="1">Homodimer.</text>
</comment>
<comment type="subcellular location">
    <subcellularLocation>
        <location evidence="1">Cytoplasm</location>
    </subcellularLocation>
</comment>
<comment type="domain">
    <text evidence="1">The last Arg residue of the ACP-binding site is essential for the weak association between ACP/AcpP and FabH.</text>
</comment>
<comment type="similarity">
    <text evidence="1">Belongs to the thiolase-like superfamily. FabH family.</text>
</comment>
<reference key="1">
    <citation type="journal article" date="2010" name="J. Bacteriol.">
        <title>Genome sequence of the dioxin-mineralizing bacterium Sphingomonas wittichii RW1.</title>
        <authorList>
            <person name="Miller T.R."/>
            <person name="Delcher A.L."/>
            <person name="Salzberg S.L."/>
            <person name="Saunders E."/>
            <person name="Detter J.C."/>
            <person name="Halden R.U."/>
        </authorList>
    </citation>
    <scope>NUCLEOTIDE SEQUENCE [LARGE SCALE GENOMIC DNA]</scope>
    <source>
        <strain>DSM 6014 / CCUG 31198 / JCM 15750 / NBRC 105917 / EY 4224 / RW1</strain>
    </source>
</reference>
<feature type="chain" id="PRO_1000187895" description="Beta-ketoacyl-[acyl-carrier-protein] synthase III">
    <location>
        <begin position="1"/>
        <end position="319"/>
    </location>
</feature>
<feature type="region of interest" description="ACP-binding" evidence="1">
    <location>
        <begin position="247"/>
        <end position="251"/>
    </location>
</feature>
<feature type="active site" evidence="1">
    <location>
        <position position="113"/>
    </location>
</feature>
<feature type="active site" evidence="1">
    <location>
        <position position="246"/>
    </location>
</feature>
<feature type="active site" evidence="1">
    <location>
        <position position="276"/>
    </location>
</feature>
<sequence>MRRAVVIGTGSALPRRQVSNAELARTVDTSDEWIVERTGIRNRYVAGEGETTSTLATEAARKAIEAAGIAPSDIGLIILATATPDQTFPASATMVQAALGIGDCVAFDVQAVCSGFLYALSVADSMIRGGSATHALVIGAETFSRILDWEDRTTCVLFGDGAGAVVLKAEEGGDRGVLATRLHADGRHNQLLYVDGGPSTTQTVGKLRMKGQEVFRHAVTNLAQVLREVMGDAGLTVDDIDWVVPHQANRRILDATARKLGLPAERVIVTVDQHANTSAASVPLALDVAVRDGRIKPGDLLVLEAMGGGFTWGAAAIRY</sequence>
<accession>A5VC86</accession>
<protein>
    <recommendedName>
        <fullName evidence="1">Beta-ketoacyl-[acyl-carrier-protein] synthase III</fullName>
        <shortName evidence="1">Beta-ketoacyl-ACP synthase III</shortName>
        <shortName evidence="1">KAS III</shortName>
        <ecNumber evidence="1">2.3.1.180</ecNumber>
    </recommendedName>
    <alternativeName>
        <fullName evidence="1">3-oxoacyl-[acyl-carrier-protein] synthase 3</fullName>
    </alternativeName>
    <alternativeName>
        <fullName evidence="1">3-oxoacyl-[acyl-carrier-protein] synthase III</fullName>
    </alternativeName>
</protein>
<dbReference type="EC" id="2.3.1.180" evidence="1"/>
<dbReference type="EMBL" id="CP000699">
    <property type="protein sequence ID" value="ABQ69902.1"/>
    <property type="molecule type" value="Genomic_DNA"/>
</dbReference>
<dbReference type="SMR" id="A5VC86"/>
<dbReference type="STRING" id="392499.Swit_3556"/>
<dbReference type="PaxDb" id="392499-Swit_3556"/>
<dbReference type="KEGG" id="swi:Swit_3556"/>
<dbReference type="eggNOG" id="COG0332">
    <property type="taxonomic scope" value="Bacteria"/>
</dbReference>
<dbReference type="HOGENOM" id="CLU_039592_3_1_5"/>
<dbReference type="OrthoDB" id="9815506at2"/>
<dbReference type="UniPathway" id="UPA00094"/>
<dbReference type="Proteomes" id="UP000001989">
    <property type="component" value="Chromosome"/>
</dbReference>
<dbReference type="GO" id="GO:0005737">
    <property type="term" value="C:cytoplasm"/>
    <property type="evidence" value="ECO:0007669"/>
    <property type="project" value="UniProtKB-SubCell"/>
</dbReference>
<dbReference type="GO" id="GO:0004315">
    <property type="term" value="F:3-oxoacyl-[acyl-carrier-protein] synthase activity"/>
    <property type="evidence" value="ECO:0007669"/>
    <property type="project" value="InterPro"/>
</dbReference>
<dbReference type="GO" id="GO:0033818">
    <property type="term" value="F:beta-ketoacyl-acyl-carrier-protein synthase III activity"/>
    <property type="evidence" value="ECO:0007669"/>
    <property type="project" value="UniProtKB-UniRule"/>
</dbReference>
<dbReference type="GO" id="GO:0006633">
    <property type="term" value="P:fatty acid biosynthetic process"/>
    <property type="evidence" value="ECO:0007669"/>
    <property type="project" value="UniProtKB-UniRule"/>
</dbReference>
<dbReference type="CDD" id="cd00830">
    <property type="entry name" value="KAS_III"/>
    <property type="match status" value="1"/>
</dbReference>
<dbReference type="FunFam" id="3.40.47.10:FF:000004">
    <property type="entry name" value="3-oxoacyl-[acyl-carrier-protein] synthase 3"/>
    <property type="match status" value="1"/>
</dbReference>
<dbReference type="Gene3D" id="3.40.47.10">
    <property type="match status" value="1"/>
</dbReference>
<dbReference type="HAMAP" id="MF_01815">
    <property type="entry name" value="FabH"/>
    <property type="match status" value="1"/>
</dbReference>
<dbReference type="InterPro" id="IPR013747">
    <property type="entry name" value="ACP_syn_III_C"/>
</dbReference>
<dbReference type="InterPro" id="IPR013751">
    <property type="entry name" value="ACP_syn_III_N"/>
</dbReference>
<dbReference type="InterPro" id="IPR004655">
    <property type="entry name" value="FabH"/>
</dbReference>
<dbReference type="InterPro" id="IPR016039">
    <property type="entry name" value="Thiolase-like"/>
</dbReference>
<dbReference type="NCBIfam" id="TIGR00747">
    <property type="entry name" value="fabH"/>
    <property type="match status" value="1"/>
</dbReference>
<dbReference type="NCBIfam" id="NF006829">
    <property type="entry name" value="PRK09352.1"/>
    <property type="match status" value="1"/>
</dbReference>
<dbReference type="PANTHER" id="PTHR43091">
    <property type="entry name" value="3-OXOACYL-[ACYL-CARRIER-PROTEIN] SYNTHASE"/>
    <property type="match status" value="1"/>
</dbReference>
<dbReference type="PANTHER" id="PTHR43091:SF1">
    <property type="entry name" value="BETA-KETOACYL-[ACYL-CARRIER-PROTEIN] SYNTHASE III, CHLOROPLASTIC"/>
    <property type="match status" value="1"/>
</dbReference>
<dbReference type="Pfam" id="PF08545">
    <property type="entry name" value="ACP_syn_III"/>
    <property type="match status" value="1"/>
</dbReference>
<dbReference type="Pfam" id="PF08541">
    <property type="entry name" value="ACP_syn_III_C"/>
    <property type="match status" value="1"/>
</dbReference>
<dbReference type="SUPFAM" id="SSF53901">
    <property type="entry name" value="Thiolase-like"/>
    <property type="match status" value="1"/>
</dbReference>
<proteinExistence type="inferred from homology"/>
<organism>
    <name type="scientific">Rhizorhabdus wittichii (strain DSM 6014 / CCUG 31198 / JCM 15750 / NBRC 105917 / EY 4224 / RW1)</name>
    <name type="common">Sphingomonas wittichii</name>
    <dbReference type="NCBI Taxonomy" id="392499"/>
    <lineage>
        <taxon>Bacteria</taxon>
        <taxon>Pseudomonadati</taxon>
        <taxon>Pseudomonadota</taxon>
        <taxon>Alphaproteobacteria</taxon>
        <taxon>Sphingomonadales</taxon>
        <taxon>Sphingomonadaceae</taxon>
        <taxon>Rhizorhabdus</taxon>
    </lineage>
</organism>
<evidence type="ECO:0000255" key="1">
    <source>
        <dbReference type="HAMAP-Rule" id="MF_01815"/>
    </source>
</evidence>
<name>FABH_RHIWR</name>
<gene>
    <name evidence="1" type="primary">fabH</name>
    <name type="ordered locus">Swit_3556</name>
</gene>
<keyword id="KW-0012">Acyltransferase</keyword>
<keyword id="KW-0963">Cytoplasm</keyword>
<keyword id="KW-0275">Fatty acid biosynthesis</keyword>
<keyword id="KW-0276">Fatty acid metabolism</keyword>
<keyword id="KW-0444">Lipid biosynthesis</keyword>
<keyword id="KW-0443">Lipid metabolism</keyword>
<keyword id="KW-0511">Multifunctional enzyme</keyword>
<keyword id="KW-1185">Reference proteome</keyword>
<keyword id="KW-0808">Transferase</keyword>